<dbReference type="EC" id="2.7.7.7" evidence="1"/>
<dbReference type="EMBL" id="CP000736">
    <property type="protein sequence ID" value="ABR52817.1"/>
    <property type="molecule type" value="Genomic_DNA"/>
</dbReference>
<dbReference type="SMR" id="A6U2Z9"/>
<dbReference type="KEGG" id="sah:SaurJH1_1983"/>
<dbReference type="HOGENOM" id="CLU_012348_1_2_9"/>
<dbReference type="GO" id="GO:0005829">
    <property type="term" value="C:cytosol"/>
    <property type="evidence" value="ECO:0007669"/>
    <property type="project" value="TreeGrafter"/>
</dbReference>
<dbReference type="GO" id="GO:0003684">
    <property type="term" value="F:damaged DNA binding"/>
    <property type="evidence" value="ECO:0007669"/>
    <property type="project" value="InterPro"/>
</dbReference>
<dbReference type="GO" id="GO:0003887">
    <property type="term" value="F:DNA-directed DNA polymerase activity"/>
    <property type="evidence" value="ECO:0007669"/>
    <property type="project" value="UniProtKB-UniRule"/>
</dbReference>
<dbReference type="GO" id="GO:0000287">
    <property type="term" value="F:magnesium ion binding"/>
    <property type="evidence" value="ECO:0007669"/>
    <property type="project" value="UniProtKB-UniRule"/>
</dbReference>
<dbReference type="GO" id="GO:0006261">
    <property type="term" value="P:DNA-templated DNA replication"/>
    <property type="evidence" value="ECO:0007669"/>
    <property type="project" value="UniProtKB-UniRule"/>
</dbReference>
<dbReference type="GO" id="GO:0042276">
    <property type="term" value="P:error-prone translesion synthesis"/>
    <property type="evidence" value="ECO:0007669"/>
    <property type="project" value="TreeGrafter"/>
</dbReference>
<dbReference type="GO" id="GO:0009432">
    <property type="term" value="P:SOS response"/>
    <property type="evidence" value="ECO:0007669"/>
    <property type="project" value="TreeGrafter"/>
</dbReference>
<dbReference type="CDD" id="cd03586">
    <property type="entry name" value="PolY_Pol_IV_kappa"/>
    <property type="match status" value="1"/>
</dbReference>
<dbReference type="FunFam" id="3.30.1490.100:FF:000004">
    <property type="entry name" value="DNA polymerase IV"/>
    <property type="match status" value="1"/>
</dbReference>
<dbReference type="FunFam" id="3.40.1170.60:FF:000001">
    <property type="entry name" value="DNA polymerase IV"/>
    <property type="match status" value="1"/>
</dbReference>
<dbReference type="Gene3D" id="3.30.70.270">
    <property type="match status" value="1"/>
</dbReference>
<dbReference type="Gene3D" id="3.40.1170.60">
    <property type="match status" value="1"/>
</dbReference>
<dbReference type="Gene3D" id="1.10.150.20">
    <property type="entry name" value="5' to 3' exonuclease, C-terminal subdomain"/>
    <property type="match status" value="1"/>
</dbReference>
<dbReference type="Gene3D" id="3.30.1490.100">
    <property type="entry name" value="DNA polymerase, Y-family, little finger domain"/>
    <property type="match status" value="1"/>
</dbReference>
<dbReference type="HAMAP" id="MF_01113">
    <property type="entry name" value="DNApol_IV"/>
    <property type="match status" value="1"/>
</dbReference>
<dbReference type="InterPro" id="IPR043502">
    <property type="entry name" value="DNA/RNA_pol_sf"/>
</dbReference>
<dbReference type="InterPro" id="IPR036775">
    <property type="entry name" value="DNA_pol_Y-fam_lit_finger_sf"/>
</dbReference>
<dbReference type="InterPro" id="IPR017961">
    <property type="entry name" value="DNA_pol_Y-fam_little_finger"/>
</dbReference>
<dbReference type="InterPro" id="IPR050116">
    <property type="entry name" value="DNA_polymerase-Y"/>
</dbReference>
<dbReference type="InterPro" id="IPR022880">
    <property type="entry name" value="DNApol_IV"/>
</dbReference>
<dbReference type="InterPro" id="IPR043128">
    <property type="entry name" value="Rev_trsase/Diguanyl_cyclase"/>
</dbReference>
<dbReference type="InterPro" id="IPR001126">
    <property type="entry name" value="UmuC"/>
</dbReference>
<dbReference type="NCBIfam" id="NF002677">
    <property type="entry name" value="PRK02406.1"/>
    <property type="match status" value="1"/>
</dbReference>
<dbReference type="NCBIfam" id="NF010731">
    <property type="entry name" value="PRK14133.1"/>
    <property type="match status" value="1"/>
</dbReference>
<dbReference type="PANTHER" id="PTHR11076:SF33">
    <property type="entry name" value="DNA POLYMERASE KAPPA"/>
    <property type="match status" value="1"/>
</dbReference>
<dbReference type="PANTHER" id="PTHR11076">
    <property type="entry name" value="DNA REPAIR POLYMERASE UMUC / TRANSFERASE FAMILY MEMBER"/>
    <property type="match status" value="1"/>
</dbReference>
<dbReference type="Pfam" id="PF00817">
    <property type="entry name" value="IMS"/>
    <property type="match status" value="1"/>
</dbReference>
<dbReference type="Pfam" id="PF11799">
    <property type="entry name" value="IMS_C"/>
    <property type="match status" value="1"/>
</dbReference>
<dbReference type="SUPFAM" id="SSF56672">
    <property type="entry name" value="DNA/RNA polymerases"/>
    <property type="match status" value="1"/>
</dbReference>
<dbReference type="SUPFAM" id="SSF100879">
    <property type="entry name" value="Lesion bypass DNA polymerase (Y-family), little finger domain"/>
    <property type="match status" value="1"/>
</dbReference>
<dbReference type="PROSITE" id="PS50173">
    <property type="entry name" value="UMUC"/>
    <property type="match status" value="1"/>
</dbReference>
<proteinExistence type="inferred from homology"/>
<accession>A6U2Z9</accession>
<gene>
    <name evidence="1" type="primary">dinB</name>
    <name type="ordered locus">SaurJH1_1983</name>
</gene>
<organism>
    <name type="scientific">Staphylococcus aureus (strain JH1)</name>
    <dbReference type="NCBI Taxonomy" id="359787"/>
    <lineage>
        <taxon>Bacteria</taxon>
        <taxon>Bacillati</taxon>
        <taxon>Bacillota</taxon>
        <taxon>Bacilli</taxon>
        <taxon>Bacillales</taxon>
        <taxon>Staphylococcaceae</taxon>
        <taxon>Staphylococcus</taxon>
    </lineage>
</organism>
<evidence type="ECO:0000255" key="1">
    <source>
        <dbReference type="HAMAP-Rule" id="MF_01113"/>
    </source>
</evidence>
<name>DPO4_STAA2</name>
<comment type="function">
    <text evidence="1">Poorly processive, error-prone DNA polymerase involved in untargeted mutagenesis. Copies undamaged DNA at stalled replication forks, which arise in vivo from mismatched or misaligned primer ends. These misaligned primers can be extended by PolIV. Exhibits no 3'-5' exonuclease (proofreading) activity. May be involved in translesional synthesis, in conjunction with the beta clamp from PolIII.</text>
</comment>
<comment type="catalytic activity">
    <reaction evidence="1">
        <text>DNA(n) + a 2'-deoxyribonucleoside 5'-triphosphate = DNA(n+1) + diphosphate</text>
        <dbReference type="Rhea" id="RHEA:22508"/>
        <dbReference type="Rhea" id="RHEA-COMP:17339"/>
        <dbReference type="Rhea" id="RHEA-COMP:17340"/>
        <dbReference type="ChEBI" id="CHEBI:33019"/>
        <dbReference type="ChEBI" id="CHEBI:61560"/>
        <dbReference type="ChEBI" id="CHEBI:173112"/>
        <dbReference type="EC" id="2.7.7.7"/>
    </reaction>
</comment>
<comment type="cofactor">
    <cofactor evidence="1">
        <name>Mg(2+)</name>
        <dbReference type="ChEBI" id="CHEBI:18420"/>
    </cofactor>
    <text evidence="1">Binds 2 magnesium ions per subunit.</text>
</comment>
<comment type="subunit">
    <text evidence="1">Monomer.</text>
</comment>
<comment type="subcellular location">
    <subcellularLocation>
        <location evidence="1">Cytoplasm</location>
    </subcellularLocation>
</comment>
<comment type="similarity">
    <text evidence="1">Belongs to the DNA polymerase type-Y family.</text>
</comment>
<keyword id="KW-0963">Cytoplasm</keyword>
<keyword id="KW-0227">DNA damage</keyword>
<keyword id="KW-0234">DNA repair</keyword>
<keyword id="KW-0235">DNA replication</keyword>
<keyword id="KW-0238">DNA-binding</keyword>
<keyword id="KW-0239">DNA-directed DNA polymerase</keyword>
<keyword id="KW-0460">Magnesium</keyword>
<keyword id="KW-0479">Metal-binding</keyword>
<keyword id="KW-0515">Mutator protein</keyword>
<keyword id="KW-0548">Nucleotidyltransferase</keyword>
<keyword id="KW-0808">Transferase</keyword>
<sequence>MTERRIIHIDMDYFFAQVEMRDNPKLKGKPVIVGGKASSRGVVSTASYEARKYGVHSAMPMSQAHKLCPNGYFVTSNFGAYRETSAQIMSIFRSYTDKVEPMSLDEAYLDITELVRPDLPASKIAQYIRKDILEQTHLTASAGVSYNKFLAKLASGMNKPDGLTVIDYQNVHDILMTLDIGDFPGVGKASKKVMHDNGIFNGRDLYEKTEFELIRLFGKRGRGLYNKARGIDHSEVKSSRVRKSVGTERTFATDVNDDEEILRKVWELSGKTAERLNKLQKSAKTVTVKIKTYQFETLSKQMSLRDSVSSEEDIYNIAYLLYNDLKDPDVPIRLIGVTVGNLEQSTNKNMTIYDFI</sequence>
<feature type="chain" id="PRO_1000084944" description="DNA polymerase IV">
    <location>
        <begin position="1"/>
        <end position="356"/>
    </location>
</feature>
<feature type="domain" description="UmuC" evidence="1">
    <location>
        <begin position="6"/>
        <end position="187"/>
    </location>
</feature>
<feature type="active site" evidence="1">
    <location>
        <position position="106"/>
    </location>
</feature>
<feature type="binding site" evidence="1">
    <location>
        <position position="10"/>
    </location>
    <ligand>
        <name>Mg(2+)</name>
        <dbReference type="ChEBI" id="CHEBI:18420"/>
    </ligand>
</feature>
<feature type="binding site" evidence="1">
    <location>
        <position position="105"/>
    </location>
    <ligand>
        <name>Mg(2+)</name>
        <dbReference type="ChEBI" id="CHEBI:18420"/>
    </ligand>
</feature>
<feature type="site" description="Substrate discrimination" evidence="1">
    <location>
        <position position="15"/>
    </location>
</feature>
<protein>
    <recommendedName>
        <fullName evidence="1">DNA polymerase IV</fullName>
        <shortName evidence="1">Pol IV</shortName>
        <ecNumber evidence="1">2.7.7.7</ecNumber>
    </recommendedName>
</protein>
<reference key="1">
    <citation type="submission" date="2007-06" db="EMBL/GenBank/DDBJ databases">
        <title>Complete sequence of chromosome of Staphylococcus aureus subsp. aureus JH1.</title>
        <authorList>
            <consortium name="US DOE Joint Genome Institute"/>
            <person name="Copeland A."/>
            <person name="Lucas S."/>
            <person name="Lapidus A."/>
            <person name="Barry K."/>
            <person name="Detter J.C."/>
            <person name="Glavina del Rio T."/>
            <person name="Hammon N."/>
            <person name="Israni S."/>
            <person name="Dalin E."/>
            <person name="Tice H."/>
            <person name="Pitluck S."/>
            <person name="Chain P."/>
            <person name="Malfatti S."/>
            <person name="Shin M."/>
            <person name="Vergez L."/>
            <person name="Schmutz J."/>
            <person name="Larimer F."/>
            <person name="Land M."/>
            <person name="Hauser L."/>
            <person name="Kyrpides N."/>
            <person name="Ivanova N."/>
            <person name="Tomasz A."/>
            <person name="Richardson P."/>
        </authorList>
    </citation>
    <scope>NUCLEOTIDE SEQUENCE [LARGE SCALE GENOMIC DNA]</scope>
    <source>
        <strain>JH1</strain>
    </source>
</reference>